<dbReference type="EMBL" id="U00089">
    <property type="protein sequence ID" value="AAB95875.1"/>
    <property type="molecule type" value="Genomic_DNA"/>
</dbReference>
<dbReference type="PIR" id="S73553">
    <property type="entry name" value="S73553"/>
</dbReference>
<dbReference type="SMR" id="P75180"/>
<dbReference type="IntAct" id="P75180">
    <property type="interactions" value="2"/>
</dbReference>
<dbReference type="STRING" id="272634.MPN_615"/>
<dbReference type="REBASE" id="6707">
    <property type="entry name" value="S.MpnORF615P"/>
</dbReference>
<dbReference type="EnsemblBacteria" id="AAB95875">
    <property type="protein sequence ID" value="AAB95875"/>
    <property type="gene ID" value="MPN_615"/>
</dbReference>
<dbReference type="KEGG" id="mpn:MPN_615"/>
<dbReference type="HOGENOM" id="CLU_021095_6_2_14"/>
<dbReference type="PRO" id="PR:P75180"/>
<dbReference type="Proteomes" id="UP000000808">
    <property type="component" value="Chromosome"/>
</dbReference>
<dbReference type="GO" id="GO:0003677">
    <property type="term" value="F:DNA binding"/>
    <property type="evidence" value="ECO:0007669"/>
    <property type="project" value="UniProtKB-KW"/>
</dbReference>
<dbReference type="GO" id="GO:0009307">
    <property type="term" value="P:DNA restriction-modification system"/>
    <property type="evidence" value="ECO:0007669"/>
    <property type="project" value="UniProtKB-KW"/>
</dbReference>
<dbReference type="CDD" id="cd17255">
    <property type="entry name" value="RMtype1_S_Fco49512ORF2615P-TRD2-CR2_like"/>
    <property type="match status" value="1"/>
</dbReference>
<dbReference type="Gene3D" id="3.90.220.20">
    <property type="entry name" value="DNA methylase specificity domains"/>
    <property type="match status" value="1"/>
</dbReference>
<dbReference type="InterPro" id="IPR000055">
    <property type="entry name" value="Restrct_endonuc_typeI_TRD"/>
</dbReference>
<dbReference type="InterPro" id="IPR044946">
    <property type="entry name" value="Restrct_endonuc_typeI_TRD_sf"/>
</dbReference>
<dbReference type="InterPro" id="IPR051212">
    <property type="entry name" value="Type-I_RE_S_subunit"/>
</dbReference>
<dbReference type="PANTHER" id="PTHR43140:SF1">
    <property type="entry name" value="TYPE I RESTRICTION ENZYME ECOKI SPECIFICITY SUBUNIT"/>
    <property type="match status" value="1"/>
</dbReference>
<dbReference type="PANTHER" id="PTHR43140">
    <property type="entry name" value="TYPE-1 RESTRICTION ENZYME ECOKI SPECIFICITY PROTEIN"/>
    <property type="match status" value="1"/>
</dbReference>
<dbReference type="Pfam" id="PF01420">
    <property type="entry name" value="Methylase_S"/>
    <property type="match status" value="2"/>
</dbReference>
<dbReference type="SUPFAM" id="SSF116734">
    <property type="entry name" value="DNA methylase specificity domain"/>
    <property type="match status" value="2"/>
</dbReference>
<evidence type="ECO:0000250" key="1">
    <source>
        <dbReference type="UniProtKB" id="P05719"/>
    </source>
</evidence>
<evidence type="ECO:0000269" key="2">
    <source>
    </source>
</evidence>
<evidence type="ECO:0000303" key="3">
    <source>
    </source>
</evidence>
<evidence type="ECO:0000305" key="4"/>
<evidence type="ECO:0000305" key="5">
    <source>
    </source>
</evidence>
<keyword id="KW-0238">DNA-binding</keyword>
<keyword id="KW-1185">Reference proteome</keyword>
<keyword id="KW-0680">Restriction system</keyword>
<feature type="chain" id="PRO_0000198052" description="Putative type I specificity subunit S.MpnORF615P">
    <location>
        <begin position="1"/>
        <end position="249"/>
    </location>
</feature>
<protein>
    <recommendedName>
        <fullName evidence="3">Putative type I specificity subunit S.MpnORF615P</fullName>
        <shortName>S protein</shortName>
        <shortName evidence="3">S.MpnORF615P</shortName>
    </recommendedName>
    <alternativeName>
        <fullName>Putative type-1 specificity subunit MPN_615</fullName>
    </alternativeName>
    <alternativeName>
        <fullName>S.MpnORFHP</fullName>
    </alternativeName>
</protein>
<gene>
    <name type="ordered locus">MPN_615</name>
    <name type="ORF">C12_orf249</name>
    <name type="ORF">MP227</name>
</gene>
<sequence>MQGILAEIELDFPPLQIQEKIATILDTFTELSAELRERKKQYAFYRDYLLNQENIRKIYGANIPFETFQVKDICEIRRGRAITKAYIRNNPGENPVYSAATTNDGELGRIKDCDFDGEYITWTTNGYAGVVFYRNGKFNASQDCGVLKVKNKKICTKFLSFLLKIEAPKFVHNLASRPKLSQKVMAEIELSFPPLEIQEKIADILFAFEKLCNDLVEGIPAEIEMRKKQLDYYYHLIFSKIAHFSKQLA</sequence>
<comment type="function">
    <text evidence="3 5">The specificity (S) subunit of a type I methyltransferase (MTase); this subunit dictates DNA sequence specificity. The single R subunit has multiple frameshifts and is probably not expressed.</text>
</comment>
<comment type="subunit">
    <text evidence="1">The methyltransferase is composed of M and S polypeptides.</text>
</comment>
<comment type="induction">
    <text evidence="2">Detected at low levels after 6 and 96 hours growth, there are fewer copies at 96 hours (at protein level).</text>
</comment>
<comment type="domain">
    <text evidence="1">Contains two DNA recognition domains, each specifying recognition of one of the two defined components of the target sequence.</text>
</comment>
<comment type="similarity">
    <text evidence="4">Belongs to the type-I restriction system S methylase family.</text>
</comment>
<proteinExistence type="evidence at protein level"/>
<reference key="1">
    <citation type="journal article" date="1996" name="Nucleic Acids Res.">
        <title>Complete sequence analysis of the genome of the bacterium Mycoplasma pneumoniae.</title>
        <authorList>
            <person name="Himmelreich R."/>
            <person name="Hilbert H."/>
            <person name="Plagens H."/>
            <person name="Pirkl E."/>
            <person name="Li B.-C."/>
            <person name="Herrmann R."/>
        </authorList>
    </citation>
    <scope>NUCLEOTIDE SEQUENCE [LARGE SCALE GENOMIC DNA]</scope>
    <source>
        <strain>ATCC 29342 / M129 / Subtype 1</strain>
    </source>
</reference>
<reference key="2">
    <citation type="journal article" date="2003" name="Nucleic Acids Res.">
        <title>A nomenclature for restriction enzymes, DNA methyltransferases, homing endonucleases and their genes.</title>
        <authorList>
            <person name="Roberts R.J."/>
            <person name="Belfort M."/>
            <person name="Bestor T."/>
            <person name="Bhagwat A.S."/>
            <person name="Bickle T.A."/>
            <person name="Bitinaite J."/>
            <person name="Blumenthal R.M."/>
            <person name="Degtyarev S.K."/>
            <person name="Dryden D.T."/>
            <person name="Dybvig K."/>
            <person name="Firman K."/>
            <person name="Gromova E.S."/>
            <person name="Gumport R.I."/>
            <person name="Halford S.E."/>
            <person name="Hattman S."/>
            <person name="Heitman J."/>
            <person name="Hornby D.P."/>
            <person name="Janulaitis A."/>
            <person name="Jeltsch A."/>
            <person name="Josephsen J."/>
            <person name="Kiss A."/>
            <person name="Klaenhammer T.R."/>
            <person name="Kobayashi I."/>
            <person name="Kong H."/>
            <person name="Krueger D.H."/>
            <person name="Lacks S."/>
            <person name="Marinus M.G."/>
            <person name="Miyahara M."/>
            <person name="Morgan R.D."/>
            <person name="Murray N.E."/>
            <person name="Nagaraja V."/>
            <person name="Piekarowicz A."/>
            <person name="Pingoud A."/>
            <person name="Raleigh E."/>
            <person name="Rao D.N."/>
            <person name="Reich N."/>
            <person name="Repin V.E."/>
            <person name="Selker E.U."/>
            <person name="Shaw P.C."/>
            <person name="Stein D.C."/>
            <person name="Stoddard B.L."/>
            <person name="Szybalski W."/>
            <person name="Trautner T.A."/>
            <person name="Van Etten J.L."/>
            <person name="Vitor J.M."/>
            <person name="Wilson G.G."/>
            <person name="Xu S.Y."/>
        </authorList>
    </citation>
    <scope>NOMENCLATURE</scope>
</reference>
<reference key="3">
    <citation type="journal article" date="2013" name="PLoS Genet.">
        <title>Comprehensive methylome characterization of Mycoplasma genitalium and Mycoplasma pneumoniae at single-base resolution.</title>
        <authorList>
            <person name="Lluch-Senar M."/>
            <person name="Luong K."/>
            <person name="Llorens-Rico V."/>
            <person name="Delgado J."/>
            <person name="Fang G."/>
            <person name="Spittle K."/>
            <person name="Clark T.A."/>
            <person name="Schadt E."/>
            <person name="Turner S.W."/>
            <person name="Korlach J."/>
            <person name="Serrano L."/>
        </authorList>
    </citation>
    <scope>INDUCTION</scope>
    <scope>DNA-BINDING</scope>
    <source>
        <strain>ATCC 29342 / M129 / Subtype 1</strain>
    </source>
</reference>
<accession>P75180</accession>
<name>T1SH_MYCPN</name>
<organism>
    <name type="scientific">Mycoplasma pneumoniae (strain ATCC 29342 / M129 / Subtype 1)</name>
    <name type="common">Mycoplasmoides pneumoniae</name>
    <dbReference type="NCBI Taxonomy" id="272634"/>
    <lineage>
        <taxon>Bacteria</taxon>
        <taxon>Bacillati</taxon>
        <taxon>Mycoplasmatota</taxon>
        <taxon>Mycoplasmoidales</taxon>
        <taxon>Mycoplasmoidaceae</taxon>
        <taxon>Mycoplasmoides</taxon>
    </lineage>
</organism>